<protein>
    <recommendedName>
        <fullName evidence="2">1-phosphofructokinase</fullName>
        <ecNumber evidence="2">2.7.1.56</ecNumber>
    </recommendedName>
    <alternativeName>
        <fullName evidence="2">Fructose 1-phosphate kinase</fullName>
        <shortName evidence="2">Fru1PK</shortName>
    </alternativeName>
</protein>
<reference key="1">
    <citation type="submission" date="1997-07" db="EMBL/GenBank/DDBJ databases">
        <title>Sequence analysis of the mobA-ampS region of the Bacillus subtilis chromosome.</title>
        <authorList>
            <person name="Caldwell R.M."/>
            <person name="Ferrari E."/>
        </authorList>
    </citation>
    <scope>NUCLEOTIDE SEQUENCE [GENOMIC DNA]</scope>
    <source>
        <strain>168</strain>
    </source>
</reference>
<reference key="2">
    <citation type="journal article" date="1997" name="Nature">
        <title>The complete genome sequence of the Gram-positive bacterium Bacillus subtilis.</title>
        <authorList>
            <person name="Kunst F."/>
            <person name="Ogasawara N."/>
            <person name="Moszer I."/>
            <person name="Albertini A.M."/>
            <person name="Alloni G."/>
            <person name="Azevedo V."/>
            <person name="Bertero M.G."/>
            <person name="Bessieres P."/>
            <person name="Bolotin A."/>
            <person name="Borchert S."/>
            <person name="Borriss R."/>
            <person name="Boursier L."/>
            <person name="Brans A."/>
            <person name="Braun M."/>
            <person name="Brignell S.C."/>
            <person name="Bron S."/>
            <person name="Brouillet S."/>
            <person name="Bruschi C.V."/>
            <person name="Caldwell B."/>
            <person name="Capuano V."/>
            <person name="Carter N.M."/>
            <person name="Choi S.-K."/>
            <person name="Codani J.-J."/>
            <person name="Connerton I.F."/>
            <person name="Cummings N.J."/>
            <person name="Daniel R.A."/>
            <person name="Denizot F."/>
            <person name="Devine K.M."/>
            <person name="Duesterhoeft A."/>
            <person name="Ehrlich S.D."/>
            <person name="Emmerson P.T."/>
            <person name="Entian K.-D."/>
            <person name="Errington J."/>
            <person name="Fabret C."/>
            <person name="Ferrari E."/>
            <person name="Foulger D."/>
            <person name="Fritz C."/>
            <person name="Fujita M."/>
            <person name="Fujita Y."/>
            <person name="Fuma S."/>
            <person name="Galizzi A."/>
            <person name="Galleron N."/>
            <person name="Ghim S.-Y."/>
            <person name="Glaser P."/>
            <person name="Goffeau A."/>
            <person name="Golightly E.J."/>
            <person name="Grandi G."/>
            <person name="Guiseppi G."/>
            <person name="Guy B.J."/>
            <person name="Haga K."/>
            <person name="Haiech J."/>
            <person name="Harwood C.R."/>
            <person name="Henaut A."/>
            <person name="Hilbert H."/>
            <person name="Holsappel S."/>
            <person name="Hosono S."/>
            <person name="Hullo M.-F."/>
            <person name="Itaya M."/>
            <person name="Jones L.-M."/>
            <person name="Joris B."/>
            <person name="Karamata D."/>
            <person name="Kasahara Y."/>
            <person name="Klaerr-Blanchard M."/>
            <person name="Klein C."/>
            <person name="Kobayashi Y."/>
            <person name="Koetter P."/>
            <person name="Koningstein G."/>
            <person name="Krogh S."/>
            <person name="Kumano M."/>
            <person name="Kurita K."/>
            <person name="Lapidus A."/>
            <person name="Lardinois S."/>
            <person name="Lauber J."/>
            <person name="Lazarevic V."/>
            <person name="Lee S.-M."/>
            <person name="Levine A."/>
            <person name="Liu H."/>
            <person name="Masuda S."/>
            <person name="Mauel C."/>
            <person name="Medigue C."/>
            <person name="Medina N."/>
            <person name="Mellado R.P."/>
            <person name="Mizuno M."/>
            <person name="Moestl D."/>
            <person name="Nakai S."/>
            <person name="Noback M."/>
            <person name="Noone D."/>
            <person name="O'Reilly M."/>
            <person name="Ogawa K."/>
            <person name="Ogiwara A."/>
            <person name="Oudega B."/>
            <person name="Park S.-H."/>
            <person name="Parro V."/>
            <person name="Pohl T.M."/>
            <person name="Portetelle D."/>
            <person name="Porwollik S."/>
            <person name="Prescott A.M."/>
            <person name="Presecan E."/>
            <person name="Pujic P."/>
            <person name="Purnelle B."/>
            <person name="Rapoport G."/>
            <person name="Rey M."/>
            <person name="Reynolds S."/>
            <person name="Rieger M."/>
            <person name="Rivolta C."/>
            <person name="Rocha E."/>
            <person name="Roche B."/>
            <person name="Rose M."/>
            <person name="Sadaie Y."/>
            <person name="Sato T."/>
            <person name="Scanlan E."/>
            <person name="Schleich S."/>
            <person name="Schroeter R."/>
            <person name="Scoffone F."/>
            <person name="Sekiguchi J."/>
            <person name="Sekowska A."/>
            <person name="Seror S.J."/>
            <person name="Serror P."/>
            <person name="Shin B.-S."/>
            <person name="Soldo B."/>
            <person name="Sorokin A."/>
            <person name="Tacconi E."/>
            <person name="Takagi T."/>
            <person name="Takahashi H."/>
            <person name="Takemaru K."/>
            <person name="Takeuchi M."/>
            <person name="Tamakoshi A."/>
            <person name="Tanaka T."/>
            <person name="Terpstra P."/>
            <person name="Tognoni A."/>
            <person name="Tosato V."/>
            <person name="Uchiyama S."/>
            <person name="Vandenbol M."/>
            <person name="Vannier F."/>
            <person name="Vassarotti A."/>
            <person name="Viari A."/>
            <person name="Wambutt R."/>
            <person name="Wedler E."/>
            <person name="Wedler H."/>
            <person name="Weitzenegger T."/>
            <person name="Winters P."/>
            <person name="Wipat A."/>
            <person name="Yamamoto H."/>
            <person name="Yamane K."/>
            <person name="Yasumoto K."/>
            <person name="Yata K."/>
            <person name="Yoshida K."/>
            <person name="Yoshikawa H.-F."/>
            <person name="Zumstein E."/>
            <person name="Yoshikawa H."/>
            <person name="Danchin A."/>
        </authorList>
    </citation>
    <scope>NUCLEOTIDE SEQUENCE [LARGE SCALE GENOMIC DNA]</scope>
    <source>
        <strain>168</strain>
    </source>
</reference>
<comment type="function">
    <text evidence="2">Catalyzes the ATP-dependent phosphorylation of fructose-l-phosphate to fructose-l,6-bisphosphate.</text>
</comment>
<comment type="catalytic activity">
    <reaction evidence="2">
        <text>beta-D-fructose 1-phosphate + ATP = beta-D-fructose 1,6-bisphosphate + ADP + H(+)</text>
        <dbReference type="Rhea" id="RHEA:14213"/>
        <dbReference type="ChEBI" id="CHEBI:15378"/>
        <dbReference type="ChEBI" id="CHEBI:30616"/>
        <dbReference type="ChEBI" id="CHEBI:32966"/>
        <dbReference type="ChEBI" id="CHEBI:138881"/>
        <dbReference type="ChEBI" id="CHEBI:456216"/>
        <dbReference type="EC" id="2.7.1.56"/>
    </reaction>
</comment>
<comment type="similarity">
    <text evidence="3">Belongs to the carbohydrate kinase PfkB family.</text>
</comment>
<feature type="chain" id="PRO_0000080074" description="1-phosphofructokinase">
    <location>
        <begin position="1"/>
        <end position="303"/>
    </location>
</feature>
<feature type="active site" description="Proton acceptor" evidence="1">
    <location>
        <position position="249"/>
    </location>
</feature>
<feature type="binding site" evidence="1">
    <location>
        <begin position="248"/>
        <end position="249"/>
    </location>
    <ligand>
        <name>ATP</name>
        <dbReference type="ChEBI" id="CHEBI:30616"/>
    </ligand>
</feature>
<name>K1PF_BACSU</name>
<keyword id="KW-0067">ATP-binding</keyword>
<keyword id="KW-0418">Kinase</keyword>
<keyword id="KW-0547">Nucleotide-binding</keyword>
<keyword id="KW-1185">Reference proteome</keyword>
<keyword id="KW-0808">Transferase</keyword>
<accession>O31714</accession>
<sequence length="303" mass="32791">MIYTVTLNPSVDYIVHVEDFTVGGLNRSSYDTKYPGGKGINVSRLLKRHHVASKALGFVGGFTGEYIKTFLREENLETAFSEVKGDTRINVKLKTGDETEINGQGPTISDEDFKAFLEQFQSLQEGDIVVLAGSIPSSLPHDTYEKIAEACKQQNARVVLDISGEALLKATEMKPFLMKPNHHELGEMFGTAITSVEEAVPYGKKLVEQGAEHVIVSMAGDGALLFTNEAVYFANVPKGKLVNSVGAGDSVVAGFLAGISKQLPLEEAFRLGVTSGSATAFSEELGTEEFVQQLLPEVKVTRL</sequence>
<dbReference type="EC" id="2.7.1.56" evidence="2"/>
<dbReference type="EMBL" id="AF012285">
    <property type="protein sequence ID" value="AAC24914.1"/>
    <property type="molecule type" value="Genomic_DNA"/>
</dbReference>
<dbReference type="EMBL" id="AL009126">
    <property type="protein sequence ID" value="CAB13312.1"/>
    <property type="molecule type" value="Genomic_DNA"/>
</dbReference>
<dbReference type="PIR" id="A69627">
    <property type="entry name" value="A69627"/>
</dbReference>
<dbReference type="RefSeq" id="NP_389322.1">
    <property type="nucleotide sequence ID" value="NC_000964.3"/>
</dbReference>
<dbReference type="SMR" id="O31714"/>
<dbReference type="FunCoup" id="O31714">
    <property type="interactions" value="56"/>
</dbReference>
<dbReference type="STRING" id="224308.BSU14390"/>
<dbReference type="jPOST" id="O31714"/>
<dbReference type="PaxDb" id="224308-BSU14390"/>
<dbReference type="EnsemblBacteria" id="CAB13312">
    <property type="protein sequence ID" value="CAB13312"/>
    <property type="gene ID" value="BSU_14390"/>
</dbReference>
<dbReference type="GeneID" id="938761"/>
<dbReference type="KEGG" id="bsu:BSU14390"/>
<dbReference type="PATRIC" id="fig|224308.179.peg.1569"/>
<dbReference type="eggNOG" id="COG1105">
    <property type="taxonomic scope" value="Bacteria"/>
</dbReference>
<dbReference type="InParanoid" id="O31714"/>
<dbReference type="OrthoDB" id="9801219at2"/>
<dbReference type="PhylomeDB" id="O31714"/>
<dbReference type="BioCyc" id="BSUB:BSU14390-MONOMER"/>
<dbReference type="Proteomes" id="UP000001570">
    <property type="component" value="Chromosome"/>
</dbReference>
<dbReference type="GO" id="GO:0005829">
    <property type="term" value="C:cytosol"/>
    <property type="evidence" value="ECO:0000318"/>
    <property type="project" value="GO_Central"/>
</dbReference>
<dbReference type="GO" id="GO:0008662">
    <property type="term" value="F:1-phosphofructokinase activity"/>
    <property type="evidence" value="ECO:0007669"/>
    <property type="project" value="UniProtKB-EC"/>
</dbReference>
<dbReference type="GO" id="GO:0005524">
    <property type="term" value="F:ATP binding"/>
    <property type="evidence" value="ECO:0007669"/>
    <property type="project" value="UniProtKB-KW"/>
</dbReference>
<dbReference type="GO" id="GO:0008443">
    <property type="term" value="F:phosphofructokinase activity"/>
    <property type="evidence" value="ECO:0000318"/>
    <property type="project" value="GO_Central"/>
</dbReference>
<dbReference type="CDD" id="cd01164">
    <property type="entry name" value="FruK_PfkB_like"/>
    <property type="match status" value="1"/>
</dbReference>
<dbReference type="FunFam" id="3.40.1190.20:FF:000001">
    <property type="entry name" value="Phosphofructokinase"/>
    <property type="match status" value="1"/>
</dbReference>
<dbReference type="Gene3D" id="3.40.1190.20">
    <property type="match status" value="1"/>
</dbReference>
<dbReference type="InterPro" id="IPR022463">
    <property type="entry name" value="1-PFruKinase"/>
</dbReference>
<dbReference type="InterPro" id="IPR002173">
    <property type="entry name" value="Carboh/pur_kinase_PfkB_CS"/>
</dbReference>
<dbReference type="InterPro" id="IPR011611">
    <property type="entry name" value="PfkB_dom"/>
</dbReference>
<dbReference type="InterPro" id="IPR029056">
    <property type="entry name" value="Ribokinase-like"/>
</dbReference>
<dbReference type="InterPro" id="IPR017583">
    <property type="entry name" value="Tagatose/fructose_Pkinase"/>
</dbReference>
<dbReference type="NCBIfam" id="TIGR03168">
    <property type="entry name" value="1-PFK"/>
    <property type="match status" value="1"/>
</dbReference>
<dbReference type="NCBIfam" id="TIGR03828">
    <property type="entry name" value="pfkB"/>
    <property type="match status" value="1"/>
</dbReference>
<dbReference type="PANTHER" id="PTHR46566:SF1">
    <property type="entry name" value="1-PHOSPHOFRUCTOKINASE"/>
    <property type="match status" value="1"/>
</dbReference>
<dbReference type="PANTHER" id="PTHR46566">
    <property type="entry name" value="1-PHOSPHOFRUCTOKINASE-RELATED"/>
    <property type="match status" value="1"/>
</dbReference>
<dbReference type="Pfam" id="PF00294">
    <property type="entry name" value="PfkB"/>
    <property type="match status" value="1"/>
</dbReference>
<dbReference type="PIRSF" id="PIRSF000535">
    <property type="entry name" value="1PFK/6PFK/LacC"/>
    <property type="match status" value="1"/>
</dbReference>
<dbReference type="SUPFAM" id="SSF53613">
    <property type="entry name" value="Ribokinase-like"/>
    <property type="match status" value="1"/>
</dbReference>
<dbReference type="PROSITE" id="PS00584">
    <property type="entry name" value="PFKB_KINASES_2"/>
    <property type="match status" value="1"/>
</dbReference>
<organism>
    <name type="scientific">Bacillus subtilis (strain 168)</name>
    <dbReference type="NCBI Taxonomy" id="224308"/>
    <lineage>
        <taxon>Bacteria</taxon>
        <taxon>Bacillati</taxon>
        <taxon>Bacillota</taxon>
        <taxon>Bacilli</taxon>
        <taxon>Bacillales</taxon>
        <taxon>Bacillaceae</taxon>
        <taxon>Bacillus</taxon>
    </lineage>
</organism>
<proteinExistence type="inferred from homology"/>
<gene>
    <name type="primary">fruK</name>
    <name type="synonym">fruB</name>
    <name type="ordered locus">BSU14390</name>
</gene>
<evidence type="ECO:0000250" key="1">
    <source>
        <dbReference type="UniProtKB" id="P0A9J6"/>
    </source>
</evidence>
<evidence type="ECO:0000250" key="2">
    <source>
        <dbReference type="UniProtKB" id="P0AEW9"/>
    </source>
</evidence>
<evidence type="ECO:0000305" key="3"/>